<proteinExistence type="inferred from homology"/>
<organism>
    <name type="scientific">Yarrowia lipolytica (strain CLIB 122 / E 150)</name>
    <name type="common">Yeast</name>
    <name type="synonym">Candida lipolytica</name>
    <dbReference type="NCBI Taxonomy" id="284591"/>
    <lineage>
        <taxon>Eukaryota</taxon>
        <taxon>Fungi</taxon>
        <taxon>Dikarya</taxon>
        <taxon>Ascomycota</taxon>
        <taxon>Saccharomycotina</taxon>
        <taxon>Dipodascomycetes</taxon>
        <taxon>Dipodascales</taxon>
        <taxon>Dipodascales incertae sedis</taxon>
        <taxon>Yarrowia</taxon>
    </lineage>
</organism>
<comment type="function">
    <text evidence="1">Regulatory subunit of calcineurin, a calcium-dependent, calmodulin stimulated protein phosphatase. Confers calcium sensitivity (By similarity).</text>
</comment>
<comment type="subunit">
    <text evidence="1">Composed of a catalytic subunit (A) and a regulatory subunit (B).</text>
</comment>
<comment type="miscellaneous">
    <text evidence="1">This protein has four functional calcium-binding sites.</text>
</comment>
<comment type="similarity">
    <text evidence="3">Belongs to the calcineurin regulatory subunit family.</text>
</comment>
<evidence type="ECO:0000250" key="1"/>
<evidence type="ECO:0000255" key="2">
    <source>
        <dbReference type="PROSITE-ProRule" id="PRU00448"/>
    </source>
</evidence>
<evidence type="ECO:0000305" key="3"/>
<name>CANB_YARLI</name>
<feature type="chain" id="PRO_0000073497" description="Calcineurin subunit B">
    <location>
        <begin position="1"/>
        <end position="173"/>
    </location>
</feature>
<feature type="domain" description="EF-hand 1" evidence="2">
    <location>
        <begin position="20"/>
        <end position="55"/>
    </location>
</feature>
<feature type="domain" description="EF-hand 2" evidence="2">
    <location>
        <begin position="59"/>
        <end position="87"/>
    </location>
</feature>
<feature type="domain" description="EF-hand 3" evidence="2">
    <location>
        <begin position="89"/>
        <end position="124"/>
    </location>
</feature>
<feature type="domain" description="EF-hand 4" evidence="2">
    <location>
        <begin position="130"/>
        <end position="165"/>
    </location>
</feature>
<feature type="binding site" evidence="2">
    <location>
        <position position="33"/>
    </location>
    <ligand>
        <name>Ca(2+)</name>
        <dbReference type="ChEBI" id="CHEBI:29108"/>
        <label>1</label>
    </ligand>
</feature>
<feature type="binding site" evidence="2">
    <location>
        <position position="35"/>
    </location>
    <ligand>
        <name>Ca(2+)</name>
        <dbReference type="ChEBI" id="CHEBI:29108"/>
        <label>1</label>
    </ligand>
</feature>
<feature type="binding site" evidence="2">
    <location>
        <position position="37"/>
    </location>
    <ligand>
        <name>Ca(2+)</name>
        <dbReference type="ChEBI" id="CHEBI:29108"/>
        <label>1</label>
    </ligand>
</feature>
<feature type="binding site" evidence="2">
    <location>
        <position position="44"/>
    </location>
    <ligand>
        <name>Ca(2+)</name>
        <dbReference type="ChEBI" id="CHEBI:29108"/>
        <label>1</label>
    </ligand>
</feature>
<feature type="binding site" evidence="2">
    <location>
        <position position="65"/>
    </location>
    <ligand>
        <name>Ca(2+)</name>
        <dbReference type="ChEBI" id="CHEBI:29108"/>
        <label>2</label>
    </ligand>
</feature>
<feature type="binding site" evidence="2">
    <location>
        <position position="67"/>
    </location>
    <ligand>
        <name>Ca(2+)</name>
        <dbReference type="ChEBI" id="CHEBI:29108"/>
        <label>2</label>
    </ligand>
</feature>
<feature type="binding site" evidence="2">
    <location>
        <position position="69"/>
    </location>
    <ligand>
        <name>Ca(2+)</name>
        <dbReference type="ChEBI" id="CHEBI:29108"/>
        <label>2</label>
    </ligand>
</feature>
<feature type="binding site" evidence="2">
    <location>
        <position position="71"/>
    </location>
    <ligand>
        <name>Ca(2+)</name>
        <dbReference type="ChEBI" id="CHEBI:29108"/>
        <label>2</label>
    </ligand>
</feature>
<feature type="binding site" evidence="2">
    <location>
        <position position="76"/>
    </location>
    <ligand>
        <name>Ca(2+)</name>
        <dbReference type="ChEBI" id="CHEBI:29108"/>
        <label>2</label>
    </ligand>
</feature>
<feature type="binding site" evidence="2">
    <location>
        <position position="102"/>
    </location>
    <ligand>
        <name>Ca(2+)</name>
        <dbReference type="ChEBI" id="CHEBI:29108"/>
        <label>3</label>
    </ligand>
</feature>
<feature type="binding site" evidence="2">
    <location>
        <position position="104"/>
    </location>
    <ligand>
        <name>Ca(2+)</name>
        <dbReference type="ChEBI" id="CHEBI:29108"/>
        <label>3</label>
    </ligand>
</feature>
<feature type="binding site" evidence="2">
    <location>
        <position position="106"/>
    </location>
    <ligand>
        <name>Ca(2+)</name>
        <dbReference type="ChEBI" id="CHEBI:29108"/>
        <label>3</label>
    </ligand>
</feature>
<feature type="binding site" evidence="2">
    <location>
        <position position="108"/>
    </location>
    <ligand>
        <name>Ca(2+)</name>
        <dbReference type="ChEBI" id="CHEBI:29108"/>
        <label>3</label>
    </ligand>
</feature>
<feature type="binding site" evidence="2">
    <location>
        <position position="113"/>
    </location>
    <ligand>
        <name>Ca(2+)</name>
        <dbReference type="ChEBI" id="CHEBI:29108"/>
        <label>3</label>
    </ligand>
</feature>
<feature type="binding site" evidence="2">
    <location>
        <position position="143"/>
    </location>
    <ligand>
        <name>Ca(2+)</name>
        <dbReference type="ChEBI" id="CHEBI:29108"/>
        <label>4</label>
    </ligand>
</feature>
<feature type="binding site" evidence="2">
    <location>
        <position position="145"/>
    </location>
    <ligand>
        <name>Ca(2+)</name>
        <dbReference type="ChEBI" id="CHEBI:29108"/>
        <label>4</label>
    </ligand>
</feature>
<feature type="binding site" evidence="2">
    <location>
        <position position="147"/>
    </location>
    <ligand>
        <name>Ca(2+)</name>
        <dbReference type="ChEBI" id="CHEBI:29108"/>
        <label>4</label>
    </ligand>
</feature>
<feature type="binding site" evidence="2">
    <location>
        <position position="149"/>
    </location>
    <ligand>
        <name>Ca(2+)</name>
        <dbReference type="ChEBI" id="CHEBI:29108"/>
        <label>4</label>
    </ligand>
</feature>
<feature type="binding site" evidence="2">
    <location>
        <position position="154"/>
    </location>
    <ligand>
        <name>Ca(2+)</name>
        <dbReference type="ChEBI" id="CHEBI:29108"/>
        <label>4</label>
    </ligand>
</feature>
<keyword id="KW-0106">Calcium</keyword>
<keyword id="KW-0479">Metal-binding</keyword>
<keyword id="KW-1185">Reference proteome</keyword>
<keyword id="KW-0677">Repeat</keyword>
<dbReference type="EMBL" id="CR382127">
    <property type="protein sequence ID" value="CAG84204.1"/>
    <property type="molecule type" value="Genomic_DNA"/>
</dbReference>
<dbReference type="RefSeq" id="XP_500266.1">
    <property type="nucleotide sequence ID" value="XM_500266.1"/>
</dbReference>
<dbReference type="SMR" id="Q6CGE6"/>
<dbReference type="FunCoup" id="Q6CGE6">
    <property type="interactions" value="866"/>
</dbReference>
<dbReference type="STRING" id="284591.Q6CGE6"/>
<dbReference type="EnsemblFungi" id="CAG84204">
    <property type="protein sequence ID" value="CAG84204"/>
    <property type="gene ID" value="YALI0_A19976g"/>
</dbReference>
<dbReference type="KEGG" id="yli:2906561"/>
<dbReference type="VEuPathDB" id="FungiDB:YALI0_A19976g"/>
<dbReference type="HOGENOM" id="CLU_061288_10_1_1"/>
<dbReference type="InParanoid" id="Q6CGE6"/>
<dbReference type="OMA" id="DTNFDRD"/>
<dbReference type="OrthoDB" id="78401at4891"/>
<dbReference type="Proteomes" id="UP000001300">
    <property type="component" value="Chromosome A"/>
</dbReference>
<dbReference type="GO" id="GO:0005955">
    <property type="term" value="C:calcineurin complex"/>
    <property type="evidence" value="ECO:0000318"/>
    <property type="project" value="GO_Central"/>
</dbReference>
<dbReference type="GO" id="GO:0005509">
    <property type="term" value="F:calcium ion binding"/>
    <property type="evidence" value="ECO:0007669"/>
    <property type="project" value="InterPro"/>
</dbReference>
<dbReference type="GO" id="GO:0008597">
    <property type="term" value="F:calcium-dependent protein serine/threonine phosphatase regulator activity"/>
    <property type="evidence" value="ECO:0000318"/>
    <property type="project" value="GO_Central"/>
</dbReference>
<dbReference type="GO" id="GO:0019902">
    <property type="term" value="F:phosphatase binding"/>
    <property type="evidence" value="ECO:0000318"/>
    <property type="project" value="GO_Central"/>
</dbReference>
<dbReference type="GO" id="GO:0097720">
    <property type="term" value="P:calcineurin-mediated signaling"/>
    <property type="evidence" value="ECO:0000318"/>
    <property type="project" value="GO_Central"/>
</dbReference>
<dbReference type="CDD" id="cd00051">
    <property type="entry name" value="EFh"/>
    <property type="match status" value="1"/>
</dbReference>
<dbReference type="FunFam" id="1.10.238.10:FF:000047">
    <property type="entry name" value="Calcineurin subunit B type 1"/>
    <property type="match status" value="1"/>
</dbReference>
<dbReference type="Gene3D" id="1.10.238.10">
    <property type="entry name" value="EF-hand"/>
    <property type="match status" value="1"/>
</dbReference>
<dbReference type="InterPro" id="IPR011992">
    <property type="entry name" value="EF-hand-dom_pair"/>
</dbReference>
<dbReference type="InterPro" id="IPR018247">
    <property type="entry name" value="EF_Hand_1_Ca_BS"/>
</dbReference>
<dbReference type="InterPro" id="IPR002048">
    <property type="entry name" value="EF_hand_dom"/>
</dbReference>
<dbReference type="PANTHER" id="PTHR45942">
    <property type="entry name" value="PROTEIN PHOSPATASE 3 REGULATORY SUBUNIT B ALPHA ISOFORM TYPE 1"/>
    <property type="match status" value="1"/>
</dbReference>
<dbReference type="Pfam" id="PF13202">
    <property type="entry name" value="EF-hand_5"/>
    <property type="match status" value="1"/>
</dbReference>
<dbReference type="Pfam" id="PF13499">
    <property type="entry name" value="EF-hand_7"/>
    <property type="match status" value="1"/>
</dbReference>
<dbReference type="PRINTS" id="PR01697">
    <property type="entry name" value="PARVALBUMIN"/>
</dbReference>
<dbReference type="SMART" id="SM00054">
    <property type="entry name" value="EFh"/>
    <property type="match status" value="4"/>
</dbReference>
<dbReference type="SUPFAM" id="SSF47473">
    <property type="entry name" value="EF-hand"/>
    <property type="match status" value="1"/>
</dbReference>
<dbReference type="PROSITE" id="PS00018">
    <property type="entry name" value="EF_HAND_1"/>
    <property type="match status" value="4"/>
</dbReference>
<dbReference type="PROSITE" id="PS50222">
    <property type="entry name" value="EF_HAND_2"/>
    <property type="match status" value="4"/>
</dbReference>
<accession>Q6CGE6</accession>
<reference key="1">
    <citation type="journal article" date="2004" name="Nature">
        <title>Genome evolution in yeasts.</title>
        <authorList>
            <person name="Dujon B."/>
            <person name="Sherman D."/>
            <person name="Fischer G."/>
            <person name="Durrens P."/>
            <person name="Casaregola S."/>
            <person name="Lafontaine I."/>
            <person name="de Montigny J."/>
            <person name="Marck C."/>
            <person name="Neuveglise C."/>
            <person name="Talla E."/>
            <person name="Goffard N."/>
            <person name="Frangeul L."/>
            <person name="Aigle M."/>
            <person name="Anthouard V."/>
            <person name="Babour A."/>
            <person name="Barbe V."/>
            <person name="Barnay S."/>
            <person name="Blanchin S."/>
            <person name="Beckerich J.-M."/>
            <person name="Beyne E."/>
            <person name="Bleykasten C."/>
            <person name="Boisrame A."/>
            <person name="Boyer J."/>
            <person name="Cattolico L."/>
            <person name="Confanioleri F."/>
            <person name="de Daruvar A."/>
            <person name="Despons L."/>
            <person name="Fabre E."/>
            <person name="Fairhead C."/>
            <person name="Ferry-Dumazet H."/>
            <person name="Groppi A."/>
            <person name="Hantraye F."/>
            <person name="Hennequin C."/>
            <person name="Jauniaux N."/>
            <person name="Joyet P."/>
            <person name="Kachouri R."/>
            <person name="Kerrest A."/>
            <person name="Koszul R."/>
            <person name="Lemaire M."/>
            <person name="Lesur I."/>
            <person name="Ma L."/>
            <person name="Muller H."/>
            <person name="Nicaud J.-M."/>
            <person name="Nikolski M."/>
            <person name="Oztas S."/>
            <person name="Ozier-Kalogeropoulos O."/>
            <person name="Pellenz S."/>
            <person name="Potier S."/>
            <person name="Richard G.-F."/>
            <person name="Straub M.-L."/>
            <person name="Suleau A."/>
            <person name="Swennen D."/>
            <person name="Tekaia F."/>
            <person name="Wesolowski-Louvel M."/>
            <person name="Westhof E."/>
            <person name="Wirth B."/>
            <person name="Zeniou-Meyer M."/>
            <person name="Zivanovic Y."/>
            <person name="Bolotin-Fukuhara M."/>
            <person name="Thierry A."/>
            <person name="Bouchier C."/>
            <person name="Caudron B."/>
            <person name="Scarpelli C."/>
            <person name="Gaillardin C."/>
            <person name="Weissenbach J."/>
            <person name="Wincker P."/>
            <person name="Souciet J.-L."/>
        </authorList>
    </citation>
    <scope>NUCLEOTIDE SEQUENCE [LARGE SCALE GENOMIC DNA]</scope>
    <source>
        <strain>CLIB 122 / E 150</strain>
    </source>
</reference>
<protein>
    <recommendedName>
        <fullName>Calcineurin subunit B</fullName>
    </recommendedName>
    <alternativeName>
        <fullName>Calcineurin regulatory subunit</fullName>
    </alternativeName>
    <alternativeName>
        <fullName>Protein phosphatase 2B regulatory subunit</fullName>
    </alternativeName>
</protein>
<gene>
    <name type="primary">CNB1</name>
    <name type="ordered locus">YALI0A19976g</name>
</gene>
<sequence length="173" mass="19432">MADERSKLEQAGEGTNFSSDEIDRLRKRFMKLDTDASGILETNEFLSLPGVAANPLASRLMDVFDENHSGDVDFQEFINGLSTFSTKGNKKEKLRFAFKVYDIDRDGYISNGELFIVLKMMVGNNLKDAQLQQIVDKTIMEADKDGDGKISFEEFEAQVGGTNVYQSMTLDLF</sequence>